<sequence>MFIDKAKVFIKSGKGGDGAISFRREKYVPLGGPNGGDGGDGGDIILQVDTGITTLLDFKYKKKFIAEDGENGGASKCYGRAGQDLIIKVPMGTIIREEESNKVIVDLSKKGQEFVLVRGGRGGKGNTKFATATRQAPHYAEPGMPGEELSIVLELKLLADVGLLGFPNVGKSTLLSMTTKATPKIANYHFTTLKPNLGVVAIDGIEPFVMADIPGIIEGAAEGVGLGIQFLKHIERTRLLVHIVDISGIEGREPFEDFVKINEELKKYSVKLWDRPQIVVANKSDLLYDDEVFEEFERKVKELGFAKVYKMSAATRDGVDEVIKEAARMLKEIPVKELEISEDEMYIPEEKRFTYVIDIEKDDEYNTYVISGTFVDRLLSAVNIHDADSLRYFHKVLKNKGIMNELREMGIEDGDVVRLNDFEFEYLL</sequence>
<organism>
    <name type="scientific">Clostridium botulinum (strain Eklund 17B / Type B)</name>
    <dbReference type="NCBI Taxonomy" id="935198"/>
    <lineage>
        <taxon>Bacteria</taxon>
        <taxon>Bacillati</taxon>
        <taxon>Bacillota</taxon>
        <taxon>Clostridia</taxon>
        <taxon>Eubacteriales</taxon>
        <taxon>Clostridiaceae</taxon>
        <taxon>Clostridium</taxon>
    </lineage>
</organism>
<proteinExistence type="inferred from homology"/>
<protein>
    <recommendedName>
        <fullName evidence="1">GTPase Obg</fullName>
        <ecNumber evidence="1">3.6.5.-</ecNumber>
    </recommendedName>
    <alternativeName>
        <fullName evidence="1">GTP-binding protein Obg</fullName>
    </alternativeName>
</protein>
<gene>
    <name evidence="1" type="primary">obg</name>
    <name type="ordered locus">CLL_A0581</name>
</gene>
<evidence type="ECO:0000255" key="1">
    <source>
        <dbReference type="HAMAP-Rule" id="MF_01454"/>
    </source>
</evidence>
<evidence type="ECO:0000255" key="2">
    <source>
        <dbReference type="PROSITE-ProRule" id="PRU01229"/>
    </source>
</evidence>
<evidence type="ECO:0000255" key="3">
    <source>
        <dbReference type="PROSITE-ProRule" id="PRU01231"/>
    </source>
</evidence>
<dbReference type="EC" id="3.6.5.-" evidence="1"/>
<dbReference type="EMBL" id="CP001056">
    <property type="protein sequence ID" value="ACD23605.1"/>
    <property type="molecule type" value="Genomic_DNA"/>
</dbReference>
<dbReference type="SMR" id="B2TK70"/>
<dbReference type="KEGG" id="cbk:CLL_A0581"/>
<dbReference type="PATRIC" id="fig|935198.13.peg.527"/>
<dbReference type="HOGENOM" id="CLU_011747_2_1_9"/>
<dbReference type="Proteomes" id="UP000001195">
    <property type="component" value="Chromosome"/>
</dbReference>
<dbReference type="GO" id="GO:0005737">
    <property type="term" value="C:cytoplasm"/>
    <property type="evidence" value="ECO:0007669"/>
    <property type="project" value="UniProtKB-SubCell"/>
</dbReference>
<dbReference type="GO" id="GO:0005525">
    <property type="term" value="F:GTP binding"/>
    <property type="evidence" value="ECO:0007669"/>
    <property type="project" value="UniProtKB-UniRule"/>
</dbReference>
<dbReference type="GO" id="GO:0003924">
    <property type="term" value="F:GTPase activity"/>
    <property type="evidence" value="ECO:0007669"/>
    <property type="project" value="UniProtKB-UniRule"/>
</dbReference>
<dbReference type="GO" id="GO:0000287">
    <property type="term" value="F:magnesium ion binding"/>
    <property type="evidence" value="ECO:0007669"/>
    <property type="project" value="InterPro"/>
</dbReference>
<dbReference type="GO" id="GO:0042254">
    <property type="term" value="P:ribosome biogenesis"/>
    <property type="evidence" value="ECO:0007669"/>
    <property type="project" value="UniProtKB-UniRule"/>
</dbReference>
<dbReference type="CDD" id="cd01898">
    <property type="entry name" value="Obg"/>
    <property type="match status" value="1"/>
</dbReference>
<dbReference type="FunFam" id="2.70.210.12:FF:000001">
    <property type="entry name" value="GTPase Obg"/>
    <property type="match status" value="1"/>
</dbReference>
<dbReference type="Gene3D" id="3.30.300.350">
    <property type="entry name" value="GTP-binding protein OBG, C-terminal domain"/>
    <property type="match status" value="1"/>
</dbReference>
<dbReference type="Gene3D" id="2.70.210.12">
    <property type="entry name" value="GTP1/OBG domain"/>
    <property type="match status" value="1"/>
</dbReference>
<dbReference type="Gene3D" id="3.40.50.300">
    <property type="entry name" value="P-loop containing nucleotide triphosphate hydrolases"/>
    <property type="match status" value="1"/>
</dbReference>
<dbReference type="HAMAP" id="MF_01454">
    <property type="entry name" value="GTPase_Obg"/>
    <property type="match status" value="1"/>
</dbReference>
<dbReference type="InterPro" id="IPR031167">
    <property type="entry name" value="G_OBG"/>
</dbReference>
<dbReference type="InterPro" id="IPR006073">
    <property type="entry name" value="GTP-bd"/>
</dbReference>
<dbReference type="InterPro" id="IPR014100">
    <property type="entry name" value="GTP-bd_Obg/CgtA"/>
</dbReference>
<dbReference type="InterPro" id="IPR036346">
    <property type="entry name" value="GTP-bd_prot_GTP1/OBG_C_sf"/>
</dbReference>
<dbReference type="InterPro" id="IPR006074">
    <property type="entry name" value="GTP1-OBG_CS"/>
</dbReference>
<dbReference type="InterPro" id="IPR006169">
    <property type="entry name" value="GTP1_OBG_dom"/>
</dbReference>
<dbReference type="InterPro" id="IPR036726">
    <property type="entry name" value="GTP1_OBG_dom_sf"/>
</dbReference>
<dbReference type="InterPro" id="IPR045086">
    <property type="entry name" value="OBG_GTPase"/>
</dbReference>
<dbReference type="InterPro" id="IPR015349">
    <property type="entry name" value="OCT_dom"/>
</dbReference>
<dbReference type="InterPro" id="IPR027417">
    <property type="entry name" value="P-loop_NTPase"/>
</dbReference>
<dbReference type="InterPro" id="IPR005225">
    <property type="entry name" value="Small_GTP-bd"/>
</dbReference>
<dbReference type="NCBIfam" id="TIGR02729">
    <property type="entry name" value="Obg_CgtA"/>
    <property type="match status" value="1"/>
</dbReference>
<dbReference type="NCBIfam" id="TIGR03595">
    <property type="entry name" value="Obg_CgtA_exten"/>
    <property type="match status" value="1"/>
</dbReference>
<dbReference type="NCBIfam" id="NF008954">
    <property type="entry name" value="PRK12296.1"/>
    <property type="match status" value="1"/>
</dbReference>
<dbReference type="NCBIfam" id="NF008955">
    <property type="entry name" value="PRK12297.1"/>
    <property type="match status" value="1"/>
</dbReference>
<dbReference type="NCBIfam" id="NF008956">
    <property type="entry name" value="PRK12299.1"/>
    <property type="match status" value="1"/>
</dbReference>
<dbReference type="NCBIfam" id="TIGR00231">
    <property type="entry name" value="small_GTP"/>
    <property type="match status" value="1"/>
</dbReference>
<dbReference type="PANTHER" id="PTHR11702">
    <property type="entry name" value="DEVELOPMENTALLY REGULATED GTP-BINDING PROTEIN-RELATED"/>
    <property type="match status" value="1"/>
</dbReference>
<dbReference type="PANTHER" id="PTHR11702:SF31">
    <property type="entry name" value="MITOCHONDRIAL RIBOSOME-ASSOCIATED GTPASE 2"/>
    <property type="match status" value="1"/>
</dbReference>
<dbReference type="Pfam" id="PF09269">
    <property type="entry name" value="DUF1967"/>
    <property type="match status" value="1"/>
</dbReference>
<dbReference type="Pfam" id="PF01018">
    <property type="entry name" value="GTP1_OBG"/>
    <property type="match status" value="1"/>
</dbReference>
<dbReference type="Pfam" id="PF01926">
    <property type="entry name" value="MMR_HSR1"/>
    <property type="match status" value="1"/>
</dbReference>
<dbReference type="PIRSF" id="PIRSF002401">
    <property type="entry name" value="GTP_bd_Obg/CgtA"/>
    <property type="match status" value="1"/>
</dbReference>
<dbReference type="PRINTS" id="PR00326">
    <property type="entry name" value="GTP1OBG"/>
</dbReference>
<dbReference type="SUPFAM" id="SSF102741">
    <property type="entry name" value="Obg GTP-binding protein C-terminal domain"/>
    <property type="match status" value="1"/>
</dbReference>
<dbReference type="SUPFAM" id="SSF82051">
    <property type="entry name" value="Obg GTP-binding protein N-terminal domain"/>
    <property type="match status" value="1"/>
</dbReference>
<dbReference type="SUPFAM" id="SSF52540">
    <property type="entry name" value="P-loop containing nucleoside triphosphate hydrolases"/>
    <property type="match status" value="1"/>
</dbReference>
<dbReference type="PROSITE" id="PS51710">
    <property type="entry name" value="G_OBG"/>
    <property type="match status" value="1"/>
</dbReference>
<dbReference type="PROSITE" id="PS00905">
    <property type="entry name" value="GTP1_OBG"/>
    <property type="match status" value="1"/>
</dbReference>
<dbReference type="PROSITE" id="PS51883">
    <property type="entry name" value="OBG"/>
    <property type="match status" value="1"/>
</dbReference>
<dbReference type="PROSITE" id="PS51881">
    <property type="entry name" value="OCT"/>
    <property type="match status" value="1"/>
</dbReference>
<name>OBG_CLOBB</name>
<reference key="1">
    <citation type="submission" date="2008-04" db="EMBL/GenBank/DDBJ databases">
        <title>Complete sequence of Clostridium botulinum strain Eklund.</title>
        <authorList>
            <person name="Brinkac L.M."/>
            <person name="Brown J.L."/>
            <person name="Bruce D."/>
            <person name="Detter C."/>
            <person name="Munk C."/>
            <person name="Smith L.A."/>
            <person name="Smith T.J."/>
            <person name="Sutton G."/>
            <person name="Brettin T.S."/>
        </authorList>
    </citation>
    <scope>NUCLEOTIDE SEQUENCE [LARGE SCALE GENOMIC DNA]</scope>
    <source>
        <strain>Eklund 17B / Type B</strain>
    </source>
</reference>
<keyword id="KW-0963">Cytoplasm</keyword>
<keyword id="KW-0342">GTP-binding</keyword>
<keyword id="KW-0378">Hydrolase</keyword>
<keyword id="KW-0460">Magnesium</keyword>
<keyword id="KW-0479">Metal-binding</keyword>
<keyword id="KW-0547">Nucleotide-binding</keyword>
<accession>B2TK70</accession>
<feature type="chain" id="PRO_0000385841" description="GTPase Obg">
    <location>
        <begin position="1"/>
        <end position="428"/>
    </location>
</feature>
<feature type="domain" description="Obg" evidence="3">
    <location>
        <begin position="1"/>
        <end position="158"/>
    </location>
</feature>
<feature type="domain" description="OBG-type G" evidence="1">
    <location>
        <begin position="159"/>
        <end position="331"/>
    </location>
</feature>
<feature type="domain" description="OCT" evidence="2">
    <location>
        <begin position="345"/>
        <end position="428"/>
    </location>
</feature>
<feature type="binding site" evidence="1">
    <location>
        <begin position="165"/>
        <end position="172"/>
    </location>
    <ligand>
        <name>GTP</name>
        <dbReference type="ChEBI" id="CHEBI:37565"/>
    </ligand>
</feature>
<feature type="binding site" evidence="1">
    <location>
        <position position="172"/>
    </location>
    <ligand>
        <name>Mg(2+)</name>
        <dbReference type="ChEBI" id="CHEBI:18420"/>
    </ligand>
</feature>
<feature type="binding site" evidence="1">
    <location>
        <begin position="190"/>
        <end position="194"/>
    </location>
    <ligand>
        <name>GTP</name>
        <dbReference type="ChEBI" id="CHEBI:37565"/>
    </ligand>
</feature>
<feature type="binding site" evidence="1">
    <location>
        <position position="192"/>
    </location>
    <ligand>
        <name>Mg(2+)</name>
        <dbReference type="ChEBI" id="CHEBI:18420"/>
    </ligand>
</feature>
<feature type="binding site" evidence="1">
    <location>
        <begin position="212"/>
        <end position="215"/>
    </location>
    <ligand>
        <name>GTP</name>
        <dbReference type="ChEBI" id="CHEBI:37565"/>
    </ligand>
</feature>
<feature type="binding site" evidence="1">
    <location>
        <begin position="282"/>
        <end position="285"/>
    </location>
    <ligand>
        <name>GTP</name>
        <dbReference type="ChEBI" id="CHEBI:37565"/>
    </ligand>
</feature>
<feature type="binding site" evidence="1">
    <location>
        <begin position="312"/>
        <end position="314"/>
    </location>
    <ligand>
        <name>GTP</name>
        <dbReference type="ChEBI" id="CHEBI:37565"/>
    </ligand>
</feature>
<comment type="function">
    <text evidence="1">An essential GTPase which binds GTP, GDP and possibly (p)ppGpp with moderate affinity, with high nucleotide exchange rates and a fairly low GTP hydrolysis rate. Plays a role in control of the cell cycle, stress response, ribosome biogenesis and in those bacteria that undergo differentiation, in morphogenesis control.</text>
</comment>
<comment type="cofactor">
    <cofactor evidence="1">
        <name>Mg(2+)</name>
        <dbReference type="ChEBI" id="CHEBI:18420"/>
    </cofactor>
</comment>
<comment type="subunit">
    <text evidence="1">Monomer.</text>
</comment>
<comment type="subcellular location">
    <subcellularLocation>
        <location evidence="1">Cytoplasm</location>
    </subcellularLocation>
</comment>
<comment type="similarity">
    <text evidence="1">Belongs to the TRAFAC class OBG-HflX-like GTPase superfamily. OBG GTPase family.</text>
</comment>